<comment type="function">
    <text evidence="1">Exhibits a very high intrinsic GTPase hydrolysis rate. Involved in the addition of a carboxymethylaminomethyl (cmnm) group at the wobble position (U34) of certain tRNAs, forming tRNA-cmnm(5)s(2)U34.</text>
</comment>
<comment type="cofactor">
    <cofactor evidence="1">
        <name>K(+)</name>
        <dbReference type="ChEBI" id="CHEBI:29103"/>
    </cofactor>
    <text evidence="1">Binds 1 potassium ion per subunit.</text>
</comment>
<comment type="subunit">
    <text evidence="1">Homodimer. Heterotetramer of two MnmE and two MnmG subunits.</text>
</comment>
<comment type="subcellular location">
    <subcellularLocation>
        <location evidence="1">Cytoplasm</location>
    </subcellularLocation>
</comment>
<comment type="similarity">
    <text evidence="1">Belongs to the TRAFAC class TrmE-Era-EngA-EngB-Septin-like GTPase superfamily. TrmE GTPase family.</text>
</comment>
<gene>
    <name evidence="1" type="primary">mnmE</name>
    <name evidence="1" type="synonym">trmE</name>
    <name type="ordered locus">SUN_1569</name>
</gene>
<name>MNME_SULNB</name>
<sequence length="450" mass="49943">MEKKMQNTIAAIATAYGVSSISIIRVSGNAALDIAKKISHLEEVKPRHAHLTSLYNSQNDLIDQAIMIYFKAPFSFTGEEIVEFQCHGGMIVAQEILDTILSYGIRLAEPGEFSKRAFFNGKIDLTEAEAISKLIEAKSVDAAKILAKQMKGELKYFVDESRDALLRSLAYSEVMIDYAEEDIPDDIMRSIVTQLDGLSEQIMKIVDASYRRRGLIEGFKVAIIGKPNVGKSSLLNALLSYDRAIVSDIAGTTRDTIEEQVRIGSHIIRLVDTAGIRESEDTIEKIGIERSLSSVEDADIIIALFDGSREFDSEDEKILAIVDALQDKHIIVAINKSDLEMKLDGDRINSYDPIEVSAKKGFVKLTRQMEALLDSIGEGEELMLISARQIEAVNRAKNAIAEAKEPLMNGELEFFSYHLQEAVKAISSISKPYDSEEILDKMFGEFCLGK</sequence>
<protein>
    <recommendedName>
        <fullName evidence="1">tRNA modification GTPase MnmE</fullName>
        <ecNumber evidence="1">3.6.-.-</ecNumber>
    </recommendedName>
</protein>
<dbReference type="EC" id="3.6.-.-" evidence="1"/>
<dbReference type="EMBL" id="AP009179">
    <property type="protein sequence ID" value="BAF72519.1"/>
    <property type="molecule type" value="Genomic_DNA"/>
</dbReference>
<dbReference type="SMR" id="A6QAL0"/>
<dbReference type="STRING" id="387093.SUN_1569"/>
<dbReference type="KEGG" id="sun:SUN_1569"/>
<dbReference type="eggNOG" id="COG0486">
    <property type="taxonomic scope" value="Bacteria"/>
</dbReference>
<dbReference type="HOGENOM" id="CLU_019624_4_1_7"/>
<dbReference type="Proteomes" id="UP000006378">
    <property type="component" value="Chromosome"/>
</dbReference>
<dbReference type="GO" id="GO:0005829">
    <property type="term" value="C:cytosol"/>
    <property type="evidence" value="ECO:0007669"/>
    <property type="project" value="TreeGrafter"/>
</dbReference>
<dbReference type="GO" id="GO:0005525">
    <property type="term" value="F:GTP binding"/>
    <property type="evidence" value="ECO:0007669"/>
    <property type="project" value="UniProtKB-UniRule"/>
</dbReference>
<dbReference type="GO" id="GO:0003924">
    <property type="term" value="F:GTPase activity"/>
    <property type="evidence" value="ECO:0007669"/>
    <property type="project" value="UniProtKB-UniRule"/>
</dbReference>
<dbReference type="GO" id="GO:0046872">
    <property type="term" value="F:metal ion binding"/>
    <property type="evidence" value="ECO:0007669"/>
    <property type="project" value="UniProtKB-KW"/>
</dbReference>
<dbReference type="GO" id="GO:0030488">
    <property type="term" value="P:tRNA methylation"/>
    <property type="evidence" value="ECO:0007669"/>
    <property type="project" value="TreeGrafter"/>
</dbReference>
<dbReference type="GO" id="GO:0002098">
    <property type="term" value="P:tRNA wobble uridine modification"/>
    <property type="evidence" value="ECO:0007669"/>
    <property type="project" value="TreeGrafter"/>
</dbReference>
<dbReference type="CDD" id="cd04164">
    <property type="entry name" value="trmE"/>
    <property type="match status" value="1"/>
</dbReference>
<dbReference type="CDD" id="cd14858">
    <property type="entry name" value="TrmE_N"/>
    <property type="match status" value="1"/>
</dbReference>
<dbReference type="FunFam" id="3.40.50.300:FF:001376">
    <property type="entry name" value="tRNA modification GTPase MnmE"/>
    <property type="match status" value="1"/>
</dbReference>
<dbReference type="Gene3D" id="3.40.50.300">
    <property type="entry name" value="P-loop containing nucleotide triphosphate hydrolases"/>
    <property type="match status" value="1"/>
</dbReference>
<dbReference type="Gene3D" id="3.30.1360.120">
    <property type="entry name" value="Probable tRNA modification gtpase trme, domain 1"/>
    <property type="match status" value="1"/>
</dbReference>
<dbReference type="Gene3D" id="1.20.120.430">
    <property type="entry name" value="tRNA modification GTPase MnmE domain 2"/>
    <property type="match status" value="1"/>
</dbReference>
<dbReference type="HAMAP" id="MF_00379">
    <property type="entry name" value="GTPase_MnmE"/>
    <property type="match status" value="1"/>
</dbReference>
<dbReference type="InterPro" id="IPR031168">
    <property type="entry name" value="G_TrmE"/>
</dbReference>
<dbReference type="InterPro" id="IPR006073">
    <property type="entry name" value="GTP-bd"/>
</dbReference>
<dbReference type="InterPro" id="IPR018948">
    <property type="entry name" value="GTP-bd_TrmE_N"/>
</dbReference>
<dbReference type="InterPro" id="IPR004520">
    <property type="entry name" value="GTPase_MnmE"/>
</dbReference>
<dbReference type="InterPro" id="IPR027368">
    <property type="entry name" value="MnmE_dom2"/>
</dbReference>
<dbReference type="InterPro" id="IPR025867">
    <property type="entry name" value="MnmE_helical"/>
</dbReference>
<dbReference type="InterPro" id="IPR027417">
    <property type="entry name" value="P-loop_NTPase"/>
</dbReference>
<dbReference type="InterPro" id="IPR005225">
    <property type="entry name" value="Small_GTP-bd"/>
</dbReference>
<dbReference type="InterPro" id="IPR027266">
    <property type="entry name" value="TrmE/GcvT_dom1"/>
</dbReference>
<dbReference type="NCBIfam" id="TIGR00450">
    <property type="entry name" value="mnmE_trmE_thdF"/>
    <property type="match status" value="1"/>
</dbReference>
<dbReference type="NCBIfam" id="NF003661">
    <property type="entry name" value="PRK05291.1-3"/>
    <property type="match status" value="1"/>
</dbReference>
<dbReference type="NCBIfam" id="TIGR00231">
    <property type="entry name" value="small_GTP"/>
    <property type="match status" value="1"/>
</dbReference>
<dbReference type="PANTHER" id="PTHR42714">
    <property type="entry name" value="TRNA MODIFICATION GTPASE GTPBP3"/>
    <property type="match status" value="1"/>
</dbReference>
<dbReference type="PANTHER" id="PTHR42714:SF2">
    <property type="entry name" value="TRNA MODIFICATION GTPASE GTPBP3, MITOCHONDRIAL"/>
    <property type="match status" value="1"/>
</dbReference>
<dbReference type="Pfam" id="PF01926">
    <property type="entry name" value="MMR_HSR1"/>
    <property type="match status" value="1"/>
</dbReference>
<dbReference type="Pfam" id="PF12631">
    <property type="entry name" value="MnmE_helical"/>
    <property type="match status" value="1"/>
</dbReference>
<dbReference type="Pfam" id="PF10396">
    <property type="entry name" value="TrmE_N"/>
    <property type="match status" value="1"/>
</dbReference>
<dbReference type="PRINTS" id="PR00326">
    <property type="entry name" value="GTP1OBG"/>
</dbReference>
<dbReference type="SUPFAM" id="SSF52540">
    <property type="entry name" value="P-loop containing nucleoside triphosphate hydrolases"/>
    <property type="match status" value="1"/>
</dbReference>
<dbReference type="PROSITE" id="PS51709">
    <property type="entry name" value="G_TRME"/>
    <property type="match status" value="1"/>
</dbReference>
<reference key="1">
    <citation type="journal article" date="2007" name="Proc. Natl. Acad. Sci. U.S.A.">
        <title>Deep-sea vent epsilon-proteobacterial genomes provide insights into emergence of pathogens.</title>
        <authorList>
            <person name="Nakagawa S."/>
            <person name="Takaki Y."/>
            <person name="Shimamura S."/>
            <person name="Reysenbach A.-L."/>
            <person name="Takai K."/>
            <person name="Horikoshi K."/>
        </authorList>
    </citation>
    <scope>NUCLEOTIDE SEQUENCE [LARGE SCALE GENOMIC DNA]</scope>
    <source>
        <strain>NBC37-1</strain>
    </source>
</reference>
<feature type="chain" id="PRO_0000345913" description="tRNA modification GTPase MnmE">
    <location>
        <begin position="1"/>
        <end position="450"/>
    </location>
</feature>
<feature type="domain" description="TrmE-type G">
    <location>
        <begin position="218"/>
        <end position="377"/>
    </location>
</feature>
<feature type="binding site" evidence="1">
    <location>
        <position position="25"/>
    </location>
    <ligand>
        <name>(6S)-5-formyl-5,6,7,8-tetrahydrofolate</name>
        <dbReference type="ChEBI" id="CHEBI:57457"/>
    </ligand>
</feature>
<feature type="binding site" evidence="1">
    <location>
        <position position="83"/>
    </location>
    <ligand>
        <name>(6S)-5-formyl-5,6,7,8-tetrahydrofolate</name>
        <dbReference type="ChEBI" id="CHEBI:57457"/>
    </ligand>
</feature>
<feature type="binding site" evidence="1">
    <location>
        <position position="122"/>
    </location>
    <ligand>
        <name>(6S)-5-formyl-5,6,7,8-tetrahydrofolate</name>
        <dbReference type="ChEBI" id="CHEBI:57457"/>
    </ligand>
</feature>
<feature type="binding site" evidence="1">
    <location>
        <begin position="228"/>
        <end position="233"/>
    </location>
    <ligand>
        <name>GTP</name>
        <dbReference type="ChEBI" id="CHEBI:37565"/>
    </ligand>
</feature>
<feature type="binding site" evidence="1">
    <location>
        <position position="228"/>
    </location>
    <ligand>
        <name>K(+)</name>
        <dbReference type="ChEBI" id="CHEBI:29103"/>
    </ligand>
</feature>
<feature type="binding site" evidence="1">
    <location>
        <position position="232"/>
    </location>
    <ligand>
        <name>Mg(2+)</name>
        <dbReference type="ChEBI" id="CHEBI:18420"/>
    </ligand>
</feature>
<feature type="binding site" evidence="1">
    <location>
        <begin position="247"/>
        <end position="253"/>
    </location>
    <ligand>
        <name>GTP</name>
        <dbReference type="ChEBI" id="CHEBI:37565"/>
    </ligand>
</feature>
<feature type="binding site" evidence="1">
    <location>
        <position position="247"/>
    </location>
    <ligand>
        <name>K(+)</name>
        <dbReference type="ChEBI" id="CHEBI:29103"/>
    </ligand>
</feature>
<feature type="binding site" evidence="1">
    <location>
        <position position="249"/>
    </location>
    <ligand>
        <name>K(+)</name>
        <dbReference type="ChEBI" id="CHEBI:29103"/>
    </ligand>
</feature>
<feature type="binding site" evidence="1">
    <location>
        <position position="252"/>
    </location>
    <ligand>
        <name>K(+)</name>
        <dbReference type="ChEBI" id="CHEBI:29103"/>
    </ligand>
</feature>
<feature type="binding site" evidence="1">
    <location>
        <position position="253"/>
    </location>
    <ligand>
        <name>Mg(2+)</name>
        <dbReference type="ChEBI" id="CHEBI:18420"/>
    </ligand>
</feature>
<feature type="binding site" evidence="1">
    <location>
        <begin position="272"/>
        <end position="275"/>
    </location>
    <ligand>
        <name>GTP</name>
        <dbReference type="ChEBI" id="CHEBI:37565"/>
    </ligand>
</feature>
<feature type="binding site" evidence="1">
    <location>
        <position position="450"/>
    </location>
    <ligand>
        <name>(6S)-5-formyl-5,6,7,8-tetrahydrofolate</name>
        <dbReference type="ChEBI" id="CHEBI:57457"/>
    </ligand>
</feature>
<proteinExistence type="inferred from homology"/>
<accession>A6QAL0</accession>
<keyword id="KW-0963">Cytoplasm</keyword>
<keyword id="KW-0342">GTP-binding</keyword>
<keyword id="KW-0378">Hydrolase</keyword>
<keyword id="KW-0460">Magnesium</keyword>
<keyword id="KW-0479">Metal-binding</keyword>
<keyword id="KW-0547">Nucleotide-binding</keyword>
<keyword id="KW-0630">Potassium</keyword>
<keyword id="KW-0819">tRNA processing</keyword>
<evidence type="ECO:0000255" key="1">
    <source>
        <dbReference type="HAMAP-Rule" id="MF_00379"/>
    </source>
</evidence>
<organism>
    <name type="scientific">Sulfurovum sp. (strain NBC37-1)</name>
    <dbReference type="NCBI Taxonomy" id="387093"/>
    <lineage>
        <taxon>Bacteria</taxon>
        <taxon>Pseudomonadati</taxon>
        <taxon>Campylobacterota</taxon>
        <taxon>Epsilonproteobacteria</taxon>
        <taxon>Campylobacterales</taxon>
        <taxon>Sulfurovaceae</taxon>
        <taxon>Sulfurovum</taxon>
    </lineage>
</organism>